<accession>Q9SB36</accession>
<evidence type="ECO:0000255" key="1"/>
<evidence type="ECO:0000256" key="2">
    <source>
        <dbReference type="SAM" id="MobiDB-lite"/>
    </source>
</evidence>
<evidence type="ECO:0000305" key="3"/>
<gene>
    <name type="primary">PCMP-E53</name>
    <name type="ordered locus">At4g25270</name>
    <name type="ORF">F24A6.110</name>
</gene>
<name>PP337_ARATH</name>
<proteinExistence type="inferred from homology"/>
<comment type="subcellular location">
    <subcellularLocation>
        <location evidence="3">Plastid</location>
        <location evidence="3">Chloroplast</location>
    </subcellularLocation>
</comment>
<comment type="similarity">
    <text evidence="3">Belongs to the PPR family. PCMP-E subfamily.</text>
</comment>
<comment type="online information" name="Pentatricopeptide repeat proteins">
    <link uri="https://ppr.plantenergy.uwa.edu.au"/>
</comment>
<sequence>MVSIVVHKPSFSYPSVSSSSMKKKPRHHQQLKQHRQNQYNNNGFTSLSFTKPSPTPLLIEKQSIHRTQLEALDSVITDLETSAQKGISLTEPEIFASLLETCYSLRAIDHGVRVHHLIPPYLLRNNLGISSKLVRLYASCGYAEVAHEVFDRMSKRDSSPFAWNSLISGYAELGQYEDAMALYFQMAEDGVKPDRFTFPRVLKACGGIGSVQIGEAIHRDLVKEGFGYDVYVLNALVVMYAKCGDIVKARNVFDMIPHKDYVSWNSMLTGYLHHGLLHEALDIFRLMVQNGIEPDKVAISSVLARVLSFKHGRQLHGWVIRRGMEWELSVANALIVLYSKRGQLGQACFIFDQMLERDTVSWNAIISAHSKNSNGLKYFEQMHRANAKPDGITFVSVLSLCANTGMVEDGERLFSLMSKEYGIDPKMEHYACMVNLYGRAGMMEEAYSMIVQEMGLEAGPTVWGALLYACYLHGNTDIGEVAAQRLFELEPDNEHNFELLIRIYSKAKRAEDVERVRQMMVDRGLET</sequence>
<feature type="transit peptide" description="Chloroplast" evidence="1">
    <location>
        <begin position="1"/>
        <end position="47"/>
    </location>
</feature>
<feature type="chain" id="PRO_0000363454" description="Pentatricopeptide repeat-containing protein At4g25270, chloroplastic">
    <location>
        <begin position="48"/>
        <end position="527"/>
    </location>
</feature>
<feature type="repeat" description="PPR 1">
    <location>
        <begin position="126"/>
        <end position="156"/>
    </location>
</feature>
<feature type="repeat" description="PPR 2">
    <location>
        <begin position="159"/>
        <end position="193"/>
    </location>
</feature>
<feature type="repeat" description="PPR 3">
    <location>
        <begin position="194"/>
        <end position="228"/>
    </location>
</feature>
<feature type="repeat" description="PPR 4">
    <location>
        <begin position="229"/>
        <end position="259"/>
    </location>
</feature>
<feature type="repeat" description="PPR 5">
    <location>
        <begin position="260"/>
        <end position="294"/>
    </location>
</feature>
<feature type="repeat" description="PPR 6">
    <location>
        <begin position="295"/>
        <end position="326"/>
    </location>
</feature>
<feature type="repeat" description="PPR 7">
    <location>
        <begin position="327"/>
        <end position="361"/>
    </location>
</feature>
<feature type="repeat" description="PPR 8">
    <location>
        <begin position="367"/>
        <end position="389"/>
    </location>
</feature>
<feature type="repeat" description="PPR 9">
    <location>
        <begin position="390"/>
        <end position="425"/>
    </location>
</feature>
<feature type="repeat" description="PPR 10">
    <location>
        <begin position="426"/>
        <end position="457"/>
    </location>
</feature>
<feature type="region of interest" description="Disordered" evidence="2">
    <location>
        <begin position="12"/>
        <end position="44"/>
    </location>
</feature>
<feature type="region of interest" description="Type E motif; degenerate">
    <location>
        <begin position="462"/>
        <end position="527"/>
    </location>
</feature>
<feature type="compositionally biased region" description="Basic residues" evidence="2">
    <location>
        <begin position="21"/>
        <end position="35"/>
    </location>
</feature>
<dbReference type="EMBL" id="AL035396">
    <property type="protein sequence ID" value="CAA23068.1"/>
    <property type="molecule type" value="Genomic_DNA"/>
</dbReference>
<dbReference type="EMBL" id="AL161563">
    <property type="protein sequence ID" value="CAB81338.1"/>
    <property type="molecule type" value="Genomic_DNA"/>
</dbReference>
<dbReference type="EMBL" id="CP002687">
    <property type="protein sequence ID" value="AEE85033.1"/>
    <property type="molecule type" value="Genomic_DNA"/>
</dbReference>
<dbReference type="PIR" id="T05548">
    <property type="entry name" value="T05548"/>
</dbReference>
<dbReference type="RefSeq" id="NP_194257.1">
    <property type="nucleotide sequence ID" value="NM_118659.2"/>
</dbReference>
<dbReference type="SMR" id="Q9SB36"/>
<dbReference type="FunCoup" id="Q9SB36">
    <property type="interactions" value="419"/>
</dbReference>
<dbReference type="STRING" id="3702.Q9SB36"/>
<dbReference type="GlyGen" id="Q9SB36">
    <property type="glycosylation" value="2 sites"/>
</dbReference>
<dbReference type="PaxDb" id="3702-AT4G25270.1"/>
<dbReference type="ProteomicsDB" id="249237"/>
<dbReference type="EnsemblPlants" id="AT4G25270.1">
    <property type="protein sequence ID" value="AT4G25270.1"/>
    <property type="gene ID" value="AT4G25270"/>
</dbReference>
<dbReference type="GeneID" id="828630"/>
<dbReference type="Gramene" id="AT4G25270.1">
    <property type="protein sequence ID" value="AT4G25270.1"/>
    <property type="gene ID" value="AT4G25270"/>
</dbReference>
<dbReference type="KEGG" id="ath:AT4G25270"/>
<dbReference type="Araport" id="AT4G25270"/>
<dbReference type="TAIR" id="AT4G25270">
    <property type="gene designation" value="OTP70"/>
</dbReference>
<dbReference type="eggNOG" id="KOG4197">
    <property type="taxonomic scope" value="Eukaryota"/>
</dbReference>
<dbReference type="HOGENOM" id="CLU_002706_0_1_1"/>
<dbReference type="InParanoid" id="Q9SB36"/>
<dbReference type="OMA" id="EPDNEYN"/>
<dbReference type="PhylomeDB" id="Q9SB36"/>
<dbReference type="PRO" id="PR:Q9SB36"/>
<dbReference type="Proteomes" id="UP000006548">
    <property type="component" value="Chromosome 4"/>
</dbReference>
<dbReference type="ExpressionAtlas" id="Q9SB36">
    <property type="expression patterns" value="baseline and differential"/>
</dbReference>
<dbReference type="GO" id="GO:0009507">
    <property type="term" value="C:chloroplast"/>
    <property type="evidence" value="ECO:0007669"/>
    <property type="project" value="UniProtKB-SubCell"/>
</dbReference>
<dbReference type="GO" id="GO:0003729">
    <property type="term" value="F:mRNA binding"/>
    <property type="evidence" value="ECO:0000314"/>
    <property type="project" value="TAIR"/>
</dbReference>
<dbReference type="GO" id="GO:0008380">
    <property type="term" value="P:RNA splicing"/>
    <property type="evidence" value="ECO:0000315"/>
    <property type="project" value="TAIR"/>
</dbReference>
<dbReference type="FunFam" id="1.25.40.10:FF:000729">
    <property type="entry name" value="Pentatricopeptide repeat-containing protein At4g25270, chloroplastic"/>
    <property type="match status" value="1"/>
</dbReference>
<dbReference type="FunFam" id="1.25.40.10:FF:001788">
    <property type="entry name" value="Pentatricopeptide repeat-containing protein At4g25270, chloroplastic"/>
    <property type="match status" value="1"/>
</dbReference>
<dbReference type="FunFam" id="1.25.40.10:FF:000285">
    <property type="entry name" value="Pentatricopeptide repeat-containing protein, chloroplastic"/>
    <property type="match status" value="1"/>
</dbReference>
<dbReference type="Gene3D" id="1.25.40.10">
    <property type="entry name" value="Tetratricopeptide repeat domain"/>
    <property type="match status" value="3"/>
</dbReference>
<dbReference type="InterPro" id="IPR046848">
    <property type="entry name" value="E_motif"/>
</dbReference>
<dbReference type="InterPro" id="IPR002885">
    <property type="entry name" value="Pentatricopeptide_rpt"/>
</dbReference>
<dbReference type="InterPro" id="IPR046960">
    <property type="entry name" value="PPR_At4g14850-like_plant"/>
</dbReference>
<dbReference type="InterPro" id="IPR033443">
    <property type="entry name" value="PROP1-like_PPR_dom"/>
</dbReference>
<dbReference type="InterPro" id="IPR011990">
    <property type="entry name" value="TPR-like_helical_dom_sf"/>
</dbReference>
<dbReference type="NCBIfam" id="TIGR00756">
    <property type="entry name" value="PPR"/>
    <property type="match status" value="3"/>
</dbReference>
<dbReference type="PANTHER" id="PTHR47926">
    <property type="entry name" value="PENTATRICOPEPTIDE REPEAT-CONTAINING PROTEIN"/>
    <property type="match status" value="1"/>
</dbReference>
<dbReference type="PANTHER" id="PTHR47926:SF515">
    <property type="entry name" value="UMP-CMP KINASE"/>
    <property type="match status" value="1"/>
</dbReference>
<dbReference type="Pfam" id="PF20431">
    <property type="entry name" value="E_motif"/>
    <property type="match status" value="1"/>
</dbReference>
<dbReference type="Pfam" id="PF01535">
    <property type="entry name" value="PPR"/>
    <property type="match status" value="2"/>
</dbReference>
<dbReference type="Pfam" id="PF13041">
    <property type="entry name" value="PPR_2"/>
    <property type="match status" value="2"/>
</dbReference>
<dbReference type="Pfam" id="PF17177">
    <property type="entry name" value="PPR_long"/>
    <property type="match status" value="1"/>
</dbReference>
<dbReference type="SUPFAM" id="SSF48452">
    <property type="entry name" value="TPR-like"/>
    <property type="match status" value="2"/>
</dbReference>
<dbReference type="PROSITE" id="PS51375">
    <property type="entry name" value="PPR"/>
    <property type="match status" value="9"/>
</dbReference>
<protein>
    <recommendedName>
        <fullName>Pentatricopeptide repeat-containing protein At4g25270, chloroplastic</fullName>
    </recommendedName>
</protein>
<reference key="1">
    <citation type="journal article" date="1999" name="Nature">
        <title>Sequence and analysis of chromosome 4 of the plant Arabidopsis thaliana.</title>
        <authorList>
            <person name="Mayer K.F.X."/>
            <person name="Schueller C."/>
            <person name="Wambutt R."/>
            <person name="Murphy G."/>
            <person name="Volckaert G."/>
            <person name="Pohl T."/>
            <person name="Duesterhoeft A."/>
            <person name="Stiekema W."/>
            <person name="Entian K.-D."/>
            <person name="Terryn N."/>
            <person name="Harris B."/>
            <person name="Ansorge W."/>
            <person name="Brandt P."/>
            <person name="Grivell L.A."/>
            <person name="Rieger M."/>
            <person name="Weichselgartner M."/>
            <person name="de Simone V."/>
            <person name="Obermaier B."/>
            <person name="Mache R."/>
            <person name="Mueller M."/>
            <person name="Kreis M."/>
            <person name="Delseny M."/>
            <person name="Puigdomenech P."/>
            <person name="Watson M."/>
            <person name="Schmidtheini T."/>
            <person name="Reichert B."/>
            <person name="Portetelle D."/>
            <person name="Perez-Alonso M."/>
            <person name="Boutry M."/>
            <person name="Bancroft I."/>
            <person name="Vos P."/>
            <person name="Hoheisel J."/>
            <person name="Zimmermann W."/>
            <person name="Wedler H."/>
            <person name="Ridley P."/>
            <person name="Langham S.-A."/>
            <person name="McCullagh B."/>
            <person name="Bilham L."/>
            <person name="Robben J."/>
            <person name="van der Schueren J."/>
            <person name="Grymonprez B."/>
            <person name="Chuang Y.-J."/>
            <person name="Vandenbussche F."/>
            <person name="Braeken M."/>
            <person name="Weltjens I."/>
            <person name="Voet M."/>
            <person name="Bastiaens I."/>
            <person name="Aert R."/>
            <person name="Defoor E."/>
            <person name="Weitzenegger T."/>
            <person name="Bothe G."/>
            <person name="Ramsperger U."/>
            <person name="Hilbert H."/>
            <person name="Braun M."/>
            <person name="Holzer E."/>
            <person name="Brandt A."/>
            <person name="Peters S."/>
            <person name="van Staveren M."/>
            <person name="Dirkse W."/>
            <person name="Mooijman P."/>
            <person name="Klein Lankhorst R."/>
            <person name="Rose M."/>
            <person name="Hauf J."/>
            <person name="Koetter P."/>
            <person name="Berneiser S."/>
            <person name="Hempel S."/>
            <person name="Feldpausch M."/>
            <person name="Lamberth S."/>
            <person name="Van den Daele H."/>
            <person name="De Keyser A."/>
            <person name="Buysshaert C."/>
            <person name="Gielen J."/>
            <person name="Villarroel R."/>
            <person name="De Clercq R."/>
            <person name="van Montagu M."/>
            <person name="Rogers J."/>
            <person name="Cronin A."/>
            <person name="Quail M.A."/>
            <person name="Bray-Allen S."/>
            <person name="Clark L."/>
            <person name="Doggett J."/>
            <person name="Hall S."/>
            <person name="Kay M."/>
            <person name="Lennard N."/>
            <person name="McLay K."/>
            <person name="Mayes R."/>
            <person name="Pettett A."/>
            <person name="Rajandream M.A."/>
            <person name="Lyne M."/>
            <person name="Benes V."/>
            <person name="Rechmann S."/>
            <person name="Borkova D."/>
            <person name="Bloecker H."/>
            <person name="Scharfe M."/>
            <person name="Grimm M."/>
            <person name="Loehnert T.-H."/>
            <person name="Dose S."/>
            <person name="de Haan M."/>
            <person name="Maarse A.C."/>
            <person name="Schaefer M."/>
            <person name="Mueller-Auer S."/>
            <person name="Gabel C."/>
            <person name="Fuchs M."/>
            <person name="Fartmann B."/>
            <person name="Granderath K."/>
            <person name="Dauner D."/>
            <person name="Herzl A."/>
            <person name="Neumann S."/>
            <person name="Argiriou A."/>
            <person name="Vitale D."/>
            <person name="Liguori R."/>
            <person name="Piravandi E."/>
            <person name="Massenet O."/>
            <person name="Quigley F."/>
            <person name="Clabauld G."/>
            <person name="Muendlein A."/>
            <person name="Felber R."/>
            <person name="Schnabl S."/>
            <person name="Hiller R."/>
            <person name="Schmidt W."/>
            <person name="Lecharny A."/>
            <person name="Aubourg S."/>
            <person name="Chefdor F."/>
            <person name="Cooke R."/>
            <person name="Berger C."/>
            <person name="Monfort A."/>
            <person name="Casacuberta E."/>
            <person name="Gibbons T."/>
            <person name="Weber N."/>
            <person name="Vandenbol M."/>
            <person name="Bargues M."/>
            <person name="Terol J."/>
            <person name="Torres A."/>
            <person name="Perez-Perez A."/>
            <person name="Purnelle B."/>
            <person name="Bent E."/>
            <person name="Johnson S."/>
            <person name="Tacon D."/>
            <person name="Jesse T."/>
            <person name="Heijnen L."/>
            <person name="Schwarz S."/>
            <person name="Scholler P."/>
            <person name="Heber S."/>
            <person name="Francs P."/>
            <person name="Bielke C."/>
            <person name="Frishman D."/>
            <person name="Haase D."/>
            <person name="Lemcke K."/>
            <person name="Mewes H.-W."/>
            <person name="Stocker S."/>
            <person name="Zaccaria P."/>
            <person name="Bevan M."/>
            <person name="Wilson R.K."/>
            <person name="de la Bastide M."/>
            <person name="Habermann K."/>
            <person name="Parnell L."/>
            <person name="Dedhia N."/>
            <person name="Gnoj L."/>
            <person name="Schutz K."/>
            <person name="Huang E."/>
            <person name="Spiegel L."/>
            <person name="Sekhon M."/>
            <person name="Murray J."/>
            <person name="Sheet P."/>
            <person name="Cordes M."/>
            <person name="Abu-Threideh J."/>
            <person name="Stoneking T."/>
            <person name="Kalicki J."/>
            <person name="Graves T."/>
            <person name="Harmon G."/>
            <person name="Edwards J."/>
            <person name="Latreille P."/>
            <person name="Courtney L."/>
            <person name="Cloud J."/>
            <person name="Abbott A."/>
            <person name="Scott K."/>
            <person name="Johnson D."/>
            <person name="Minx P."/>
            <person name="Bentley D."/>
            <person name="Fulton B."/>
            <person name="Miller N."/>
            <person name="Greco T."/>
            <person name="Kemp K."/>
            <person name="Kramer J."/>
            <person name="Fulton L."/>
            <person name="Mardis E."/>
            <person name="Dante M."/>
            <person name="Pepin K."/>
            <person name="Hillier L.W."/>
            <person name="Nelson J."/>
            <person name="Spieth J."/>
            <person name="Ryan E."/>
            <person name="Andrews S."/>
            <person name="Geisel C."/>
            <person name="Layman D."/>
            <person name="Du H."/>
            <person name="Ali J."/>
            <person name="Berghoff A."/>
            <person name="Jones K."/>
            <person name="Drone K."/>
            <person name="Cotton M."/>
            <person name="Joshu C."/>
            <person name="Antonoiu B."/>
            <person name="Zidanic M."/>
            <person name="Strong C."/>
            <person name="Sun H."/>
            <person name="Lamar B."/>
            <person name="Yordan C."/>
            <person name="Ma P."/>
            <person name="Zhong J."/>
            <person name="Preston R."/>
            <person name="Vil D."/>
            <person name="Shekher M."/>
            <person name="Matero A."/>
            <person name="Shah R."/>
            <person name="Swaby I.K."/>
            <person name="O'Shaughnessy A."/>
            <person name="Rodriguez M."/>
            <person name="Hoffman J."/>
            <person name="Till S."/>
            <person name="Granat S."/>
            <person name="Shohdy N."/>
            <person name="Hasegawa A."/>
            <person name="Hameed A."/>
            <person name="Lodhi M."/>
            <person name="Johnson A."/>
            <person name="Chen E."/>
            <person name="Marra M.A."/>
            <person name="Martienssen R."/>
            <person name="McCombie W.R."/>
        </authorList>
    </citation>
    <scope>NUCLEOTIDE SEQUENCE [LARGE SCALE GENOMIC DNA]</scope>
    <source>
        <strain>cv. Columbia</strain>
    </source>
</reference>
<reference key="2">
    <citation type="journal article" date="2017" name="Plant J.">
        <title>Araport11: a complete reannotation of the Arabidopsis thaliana reference genome.</title>
        <authorList>
            <person name="Cheng C.Y."/>
            <person name="Krishnakumar V."/>
            <person name="Chan A.P."/>
            <person name="Thibaud-Nissen F."/>
            <person name="Schobel S."/>
            <person name="Town C.D."/>
        </authorList>
    </citation>
    <scope>GENOME REANNOTATION</scope>
    <source>
        <strain>cv. Columbia</strain>
    </source>
</reference>
<reference key="3">
    <citation type="journal article" date="2000" name="Plant Mol. Biol.">
        <title>In Arabidopsis thaliana, 1% of the genome codes for a novel protein family unique to plants.</title>
        <authorList>
            <person name="Aubourg S."/>
            <person name="Boudet N."/>
            <person name="Kreis M."/>
            <person name="Lecharny A."/>
        </authorList>
    </citation>
    <scope>GENE FAMILY</scope>
</reference>
<reference key="4">
    <citation type="journal article" date="2004" name="Plant Cell">
        <title>Genome-wide analysis of Arabidopsis pentatricopeptide repeat proteins reveals their essential role in organelle biogenesis.</title>
        <authorList>
            <person name="Lurin C."/>
            <person name="Andres C."/>
            <person name="Aubourg S."/>
            <person name="Bellaoui M."/>
            <person name="Bitton F."/>
            <person name="Bruyere C."/>
            <person name="Caboche M."/>
            <person name="Debast C."/>
            <person name="Gualberto J."/>
            <person name="Hoffmann B."/>
            <person name="Lecharny A."/>
            <person name="Le Ret M."/>
            <person name="Martin-Magniette M.-L."/>
            <person name="Mireau H."/>
            <person name="Peeters N."/>
            <person name="Renou J.-P."/>
            <person name="Szurek B."/>
            <person name="Taconnat L."/>
            <person name="Small I."/>
        </authorList>
    </citation>
    <scope>GENE FAMILY</scope>
</reference>
<keyword id="KW-0150">Chloroplast</keyword>
<keyword id="KW-0934">Plastid</keyword>
<keyword id="KW-1185">Reference proteome</keyword>
<keyword id="KW-0677">Repeat</keyword>
<keyword id="KW-0809">Transit peptide</keyword>
<organism>
    <name type="scientific">Arabidopsis thaliana</name>
    <name type="common">Mouse-ear cress</name>
    <dbReference type="NCBI Taxonomy" id="3702"/>
    <lineage>
        <taxon>Eukaryota</taxon>
        <taxon>Viridiplantae</taxon>
        <taxon>Streptophyta</taxon>
        <taxon>Embryophyta</taxon>
        <taxon>Tracheophyta</taxon>
        <taxon>Spermatophyta</taxon>
        <taxon>Magnoliopsida</taxon>
        <taxon>eudicotyledons</taxon>
        <taxon>Gunneridae</taxon>
        <taxon>Pentapetalae</taxon>
        <taxon>rosids</taxon>
        <taxon>malvids</taxon>
        <taxon>Brassicales</taxon>
        <taxon>Brassicaceae</taxon>
        <taxon>Camelineae</taxon>
        <taxon>Arabidopsis</taxon>
    </lineage>
</organism>